<keyword id="KW-0067">ATP-binding</keyword>
<keyword id="KW-0963">Cytoplasm</keyword>
<keyword id="KW-0460">Magnesium</keyword>
<keyword id="KW-0479">Metal-binding</keyword>
<keyword id="KW-0547">Nucleotide-binding</keyword>
<keyword id="KW-0554">One-carbon metabolism</keyword>
<keyword id="KW-0630">Potassium</keyword>
<keyword id="KW-1185">Reference proteome</keyword>
<keyword id="KW-0808">Transferase</keyword>
<comment type="function">
    <text evidence="1">Catalyzes the formation of S-adenosylmethionine (AdoMet) from methionine and ATP. The overall synthetic reaction is composed of two sequential steps, AdoMet formation and the subsequent tripolyphosphate hydrolysis which occurs prior to release of AdoMet from the enzyme.</text>
</comment>
<comment type="catalytic activity">
    <reaction evidence="1">
        <text>L-methionine + ATP + H2O = S-adenosyl-L-methionine + phosphate + diphosphate</text>
        <dbReference type="Rhea" id="RHEA:21080"/>
        <dbReference type="ChEBI" id="CHEBI:15377"/>
        <dbReference type="ChEBI" id="CHEBI:30616"/>
        <dbReference type="ChEBI" id="CHEBI:33019"/>
        <dbReference type="ChEBI" id="CHEBI:43474"/>
        <dbReference type="ChEBI" id="CHEBI:57844"/>
        <dbReference type="ChEBI" id="CHEBI:59789"/>
        <dbReference type="EC" id="2.5.1.6"/>
    </reaction>
</comment>
<comment type="cofactor">
    <cofactor evidence="1">
        <name>Mg(2+)</name>
        <dbReference type="ChEBI" id="CHEBI:18420"/>
    </cofactor>
    <text evidence="1">Binds 2 divalent ions per subunit.</text>
</comment>
<comment type="cofactor">
    <cofactor evidence="1">
        <name>K(+)</name>
        <dbReference type="ChEBI" id="CHEBI:29103"/>
    </cofactor>
    <text evidence="1">Binds 1 potassium ion per subunit.</text>
</comment>
<comment type="pathway">
    <text evidence="1">Amino-acid biosynthesis; S-adenosyl-L-methionine biosynthesis; S-adenosyl-L-methionine from L-methionine: step 1/1.</text>
</comment>
<comment type="subunit">
    <text evidence="1">Homotetramer; dimer of dimers.</text>
</comment>
<comment type="subcellular location">
    <subcellularLocation>
        <location evidence="1">Cytoplasm</location>
    </subcellularLocation>
</comment>
<comment type="similarity">
    <text evidence="1">Belongs to the AdoMet synthase family.</text>
</comment>
<gene>
    <name evidence="1" type="primary">metK</name>
    <name type="ordered locus">Shew_0751</name>
</gene>
<feature type="chain" id="PRO_0000302977" description="S-adenosylmethionine synthase">
    <location>
        <begin position="1"/>
        <end position="383"/>
    </location>
</feature>
<feature type="region of interest" description="Flexible loop" evidence="1">
    <location>
        <begin position="99"/>
        <end position="109"/>
    </location>
</feature>
<feature type="binding site" description="in other chain" evidence="1">
    <location>
        <position position="15"/>
    </location>
    <ligand>
        <name>ATP</name>
        <dbReference type="ChEBI" id="CHEBI:30616"/>
        <note>ligand shared between two neighboring subunits</note>
    </ligand>
</feature>
<feature type="binding site" evidence="1">
    <location>
        <position position="17"/>
    </location>
    <ligand>
        <name>Mg(2+)</name>
        <dbReference type="ChEBI" id="CHEBI:18420"/>
    </ligand>
</feature>
<feature type="binding site" evidence="1">
    <location>
        <position position="43"/>
    </location>
    <ligand>
        <name>K(+)</name>
        <dbReference type="ChEBI" id="CHEBI:29103"/>
    </ligand>
</feature>
<feature type="binding site" description="in other chain" evidence="1">
    <location>
        <position position="56"/>
    </location>
    <ligand>
        <name>L-methionine</name>
        <dbReference type="ChEBI" id="CHEBI:57844"/>
        <note>ligand shared between two neighboring subunits</note>
    </ligand>
</feature>
<feature type="binding site" description="in other chain" evidence="1">
    <location>
        <position position="99"/>
    </location>
    <ligand>
        <name>L-methionine</name>
        <dbReference type="ChEBI" id="CHEBI:57844"/>
        <note>ligand shared between two neighboring subunits</note>
    </ligand>
</feature>
<feature type="binding site" description="in other chain" evidence="1">
    <location>
        <begin position="164"/>
        <end position="166"/>
    </location>
    <ligand>
        <name>ATP</name>
        <dbReference type="ChEBI" id="CHEBI:30616"/>
        <note>ligand shared between two neighboring subunits</note>
    </ligand>
</feature>
<feature type="binding site" description="in other chain" evidence="1">
    <location>
        <begin position="230"/>
        <end position="231"/>
    </location>
    <ligand>
        <name>ATP</name>
        <dbReference type="ChEBI" id="CHEBI:30616"/>
        <note>ligand shared between two neighboring subunits</note>
    </ligand>
</feature>
<feature type="binding site" evidence="1">
    <location>
        <position position="239"/>
    </location>
    <ligand>
        <name>ATP</name>
        <dbReference type="ChEBI" id="CHEBI:30616"/>
        <note>ligand shared between two neighboring subunits</note>
    </ligand>
</feature>
<feature type="binding site" evidence="1">
    <location>
        <position position="239"/>
    </location>
    <ligand>
        <name>L-methionine</name>
        <dbReference type="ChEBI" id="CHEBI:57844"/>
        <note>ligand shared between two neighboring subunits</note>
    </ligand>
</feature>
<feature type="binding site" description="in other chain" evidence="1">
    <location>
        <begin position="245"/>
        <end position="246"/>
    </location>
    <ligand>
        <name>ATP</name>
        <dbReference type="ChEBI" id="CHEBI:30616"/>
        <note>ligand shared between two neighboring subunits</note>
    </ligand>
</feature>
<feature type="binding site" evidence="1">
    <location>
        <position position="262"/>
    </location>
    <ligand>
        <name>ATP</name>
        <dbReference type="ChEBI" id="CHEBI:30616"/>
        <note>ligand shared between two neighboring subunits</note>
    </ligand>
</feature>
<feature type="binding site" evidence="1">
    <location>
        <position position="266"/>
    </location>
    <ligand>
        <name>ATP</name>
        <dbReference type="ChEBI" id="CHEBI:30616"/>
        <note>ligand shared between two neighboring subunits</note>
    </ligand>
</feature>
<feature type="binding site" description="in other chain" evidence="1">
    <location>
        <position position="270"/>
    </location>
    <ligand>
        <name>L-methionine</name>
        <dbReference type="ChEBI" id="CHEBI:57844"/>
        <note>ligand shared between two neighboring subunits</note>
    </ligand>
</feature>
<dbReference type="EC" id="2.5.1.6" evidence="1"/>
<dbReference type="EMBL" id="CP000606">
    <property type="protein sequence ID" value="ABO22623.1"/>
    <property type="molecule type" value="Genomic_DNA"/>
</dbReference>
<dbReference type="RefSeq" id="WP_011864557.1">
    <property type="nucleotide sequence ID" value="NC_009092.1"/>
</dbReference>
<dbReference type="SMR" id="A3QAX5"/>
<dbReference type="STRING" id="323850.Shew_0751"/>
<dbReference type="KEGG" id="slo:Shew_0751"/>
<dbReference type="eggNOG" id="COG0192">
    <property type="taxonomic scope" value="Bacteria"/>
</dbReference>
<dbReference type="HOGENOM" id="CLU_041802_1_1_6"/>
<dbReference type="OrthoDB" id="9801686at2"/>
<dbReference type="UniPathway" id="UPA00315">
    <property type="reaction ID" value="UER00080"/>
</dbReference>
<dbReference type="Proteomes" id="UP000001558">
    <property type="component" value="Chromosome"/>
</dbReference>
<dbReference type="GO" id="GO:0005737">
    <property type="term" value="C:cytoplasm"/>
    <property type="evidence" value="ECO:0007669"/>
    <property type="project" value="UniProtKB-SubCell"/>
</dbReference>
<dbReference type="GO" id="GO:0005524">
    <property type="term" value="F:ATP binding"/>
    <property type="evidence" value="ECO:0007669"/>
    <property type="project" value="UniProtKB-UniRule"/>
</dbReference>
<dbReference type="GO" id="GO:0000287">
    <property type="term" value="F:magnesium ion binding"/>
    <property type="evidence" value="ECO:0007669"/>
    <property type="project" value="UniProtKB-UniRule"/>
</dbReference>
<dbReference type="GO" id="GO:0004478">
    <property type="term" value="F:methionine adenosyltransferase activity"/>
    <property type="evidence" value="ECO:0007669"/>
    <property type="project" value="UniProtKB-UniRule"/>
</dbReference>
<dbReference type="GO" id="GO:0006730">
    <property type="term" value="P:one-carbon metabolic process"/>
    <property type="evidence" value="ECO:0007669"/>
    <property type="project" value="UniProtKB-KW"/>
</dbReference>
<dbReference type="GO" id="GO:0006556">
    <property type="term" value="P:S-adenosylmethionine biosynthetic process"/>
    <property type="evidence" value="ECO:0007669"/>
    <property type="project" value="UniProtKB-UniRule"/>
</dbReference>
<dbReference type="CDD" id="cd18079">
    <property type="entry name" value="S-AdoMet_synt"/>
    <property type="match status" value="1"/>
</dbReference>
<dbReference type="FunFam" id="3.30.300.10:FF:000001">
    <property type="entry name" value="S-adenosylmethionine synthase"/>
    <property type="match status" value="1"/>
</dbReference>
<dbReference type="FunFam" id="3.30.300.10:FF:000003">
    <property type="entry name" value="S-adenosylmethionine synthase"/>
    <property type="match status" value="1"/>
</dbReference>
<dbReference type="FunFam" id="3.30.300.10:FF:000004">
    <property type="entry name" value="S-adenosylmethionine synthase"/>
    <property type="match status" value="1"/>
</dbReference>
<dbReference type="Gene3D" id="3.30.300.10">
    <property type="match status" value="3"/>
</dbReference>
<dbReference type="HAMAP" id="MF_00086">
    <property type="entry name" value="S_AdoMet_synth1"/>
    <property type="match status" value="1"/>
</dbReference>
<dbReference type="InterPro" id="IPR022631">
    <property type="entry name" value="ADOMET_SYNTHASE_CS"/>
</dbReference>
<dbReference type="InterPro" id="IPR022630">
    <property type="entry name" value="S-AdoMet_synt_C"/>
</dbReference>
<dbReference type="InterPro" id="IPR022629">
    <property type="entry name" value="S-AdoMet_synt_central"/>
</dbReference>
<dbReference type="InterPro" id="IPR022628">
    <property type="entry name" value="S-AdoMet_synt_N"/>
</dbReference>
<dbReference type="InterPro" id="IPR002133">
    <property type="entry name" value="S-AdoMet_synthetase"/>
</dbReference>
<dbReference type="InterPro" id="IPR022636">
    <property type="entry name" value="S-AdoMet_synthetase_sfam"/>
</dbReference>
<dbReference type="NCBIfam" id="TIGR01034">
    <property type="entry name" value="metK"/>
    <property type="match status" value="1"/>
</dbReference>
<dbReference type="PANTHER" id="PTHR11964">
    <property type="entry name" value="S-ADENOSYLMETHIONINE SYNTHETASE"/>
    <property type="match status" value="1"/>
</dbReference>
<dbReference type="Pfam" id="PF02773">
    <property type="entry name" value="S-AdoMet_synt_C"/>
    <property type="match status" value="1"/>
</dbReference>
<dbReference type="Pfam" id="PF02772">
    <property type="entry name" value="S-AdoMet_synt_M"/>
    <property type="match status" value="1"/>
</dbReference>
<dbReference type="Pfam" id="PF00438">
    <property type="entry name" value="S-AdoMet_synt_N"/>
    <property type="match status" value="1"/>
</dbReference>
<dbReference type="PIRSF" id="PIRSF000497">
    <property type="entry name" value="MAT"/>
    <property type="match status" value="1"/>
</dbReference>
<dbReference type="SUPFAM" id="SSF55973">
    <property type="entry name" value="S-adenosylmethionine synthetase"/>
    <property type="match status" value="3"/>
</dbReference>
<dbReference type="PROSITE" id="PS00376">
    <property type="entry name" value="ADOMET_SYNTHASE_1"/>
    <property type="match status" value="1"/>
</dbReference>
<dbReference type="PROSITE" id="PS00377">
    <property type="entry name" value="ADOMET_SYNTHASE_2"/>
    <property type="match status" value="1"/>
</dbReference>
<organism>
    <name type="scientific">Shewanella loihica (strain ATCC BAA-1088 / PV-4)</name>
    <dbReference type="NCBI Taxonomy" id="323850"/>
    <lineage>
        <taxon>Bacteria</taxon>
        <taxon>Pseudomonadati</taxon>
        <taxon>Pseudomonadota</taxon>
        <taxon>Gammaproteobacteria</taxon>
        <taxon>Alteromonadales</taxon>
        <taxon>Shewanellaceae</taxon>
        <taxon>Shewanella</taxon>
    </lineage>
</organism>
<evidence type="ECO:0000255" key="1">
    <source>
        <dbReference type="HAMAP-Rule" id="MF_00086"/>
    </source>
</evidence>
<name>METK_SHELP</name>
<accession>A3QAX5</accession>
<proteinExistence type="inferred from homology"/>
<protein>
    <recommendedName>
        <fullName evidence="1">S-adenosylmethionine synthase</fullName>
        <shortName evidence="1">AdoMet synthase</shortName>
        <ecNumber evidence="1">2.5.1.6</ecNumber>
    </recommendedName>
    <alternativeName>
        <fullName evidence="1">MAT</fullName>
    </alternativeName>
    <alternativeName>
        <fullName evidence="1">Methionine adenosyltransferase</fullName>
    </alternativeName>
</protein>
<sequence>MAKHLFTSESVSEGHPDKIADQISDAVLDAILEQDPKARVACETYVKTGMVMVGGEVTTSAWVDIEELTRKTVREIGYTHSDMGFDADSCAVLNAIGKQSPDINQGVDRADPKEQGAGDQGLMFGYASNETDVLMPAPITYAHALVKRQSEVRKDNTLPWLRPDAKSQVTFAYEDNKIVGIDAVVLSTQHCDSVSQSDLIEGVMETIIKPVLPAQWLNKETKFFINPTGRFVIGGPMGDCGLTGRKIIVDTYGGMARHGGGAFSGKDPSKVDRSAAYAARYVAKNIVAAGLADRCEIQVSYAIGVAEPTSISVETFGTGKVSEEVLIGLVRQHFDLRPYGLTEMLDLARPIYKATAAYGHFGRNEFPWERTDKAEALRADAKL</sequence>
<reference key="1">
    <citation type="submission" date="2007-03" db="EMBL/GenBank/DDBJ databases">
        <title>Complete sequence of Shewanella loihica PV-4.</title>
        <authorList>
            <consortium name="US DOE Joint Genome Institute"/>
            <person name="Copeland A."/>
            <person name="Lucas S."/>
            <person name="Lapidus A."/>
            <person name="Barry K."/>
            <person name="Detter J.C."/>
            <person name="Glavina del Rio T."/>
            <person name="Hammon N."/>
            <person name="Israni S."/>
            <person name="Dalin E."/>
            <person name="Tice H."/>
            <person name="Pitluck S."/>
            <person name="Chain P."/>
            <person name="Malfatti S."/>
            <person name="Shin M."/>
            <person name="Vergez L."/>
            <person name="Schmutz J."/>
            <person name="Larimer F."/>
            <person name="Land M."/>
            <person name="Hauser L."/>
            <person name="Kyrpides N."/>
            <person name="Mikhailova N."/>
            <person name="Romine M.F."/>
            <person name="Serres G."/>
            <person name="Fredrickson J."/>
            <person name="Tiedje J."/>
            <person name="Richardson P."/>
        </authorList>
    </citation>
    <scope>NUCLEOTIDE SEQUENCE [LARGE SCALE GENOMIC DNA]</scope>
    <source>
        <strain>ATCC BAA-1088 / PV-4</strain>
    </source>
</reference>